<gene>
    <name evidence="1" type="primary">lpxC</name>
    <name type="ordered locus">BR1424</name>
    <name type="ordered locus">BS1330_I1418</name>
</gene>
<reference key="1">
    <citation type="journal article" date="2002" name="Proc. Natl. Acad. Sci. U.S.A.">
        <title>The Brucella suis genome reveals fundamental similarities between animal and plant pathogens and symbionts.</title>
        <authorList>
            <person name="Paulsen I.T."/>
            <person name="Seshadri R."/>
            <person name="Nelson K.E."/>
            <person name="Eisen J.A."/>
            <person name="Heidelberg J.F."/>
            <person name="Read T.D."/>
            <person name="Dodson R.J."/>
            <person name="Umayam L.A."/>
            <person name="Brinkac L.M."/>
            <person name="Beanan M.J."/>
            <person name="Daugherty S.C."/>
            <person name="DeBoy R.T."/>
            <person name="Durkin A.S."/>
            <person name="Kolonay J.F."/>
            <person name="Madupu R."/>
            <person name="Nelson W.C."/>
            <person name="Ayodeji B."/>
            <person name="Kraul M."/>
            <person name="Shetty J."/>
            <person name="Malek J.A."/>
            <person name="Van Aken S.E."/>
            <person name="Riedmuller S."/>
            <person name="Tettelin H."/>
            <person name="Gill S.R."/>
            <person name="White O."/>
            <person name="Salzberg S.L."/>
            <person name="Hoover D.L."/>
            <person name="Lindler L.E."/>
            <person name="Halling S.M."/>
            <person name="Boyle S.M."/>
            <person name="Fraser C.M."/>
        </authorList>
    </citation>
    <scope>NUCLEOTIDE SEQUENCE [LARGE SCALE GENOMIC DNA]</scope>
    <source>
        <strain>1330</strain>
    </source>
</reference>
<reference key="2">
    <citation type="journal article" date="2011" name="J. Bacteriol.">
        <title>Revised genome sequence of Brucella suis 1330.</title>
        <authorList>
            <person name="Tae H."/>
            <person name="Shallom S."/>
            <person name="Settlage R."/>
            <person name="Preston D."/>
            <person name="Adams L.G."/>
            <person name="Garner H.R."/>
        </authorList>
    </citation>
    <scope>NUCLEOTIDE SEQUENCE [LARGE SCALE GENOMIC DNA]</scope>
    <source>
        <strain>1330</strain>
    </source>
</reference>
<keyword id="KW-0378">Hydrolase</keyword>
<keyword id="KW-0441">Lipid A biosynthesis</keyword>
<keyword id="KW-0444">Lipid biosynthesis</keyword>
<keyword id="KW-0443">Lipid metabolism</keyword>
<keyword id="KW-0479">Metal-binding</keyword>
<keyword id="KW-0862">Zinc</keyword>
<organism>
    <name type="scientific">Brucella suis biovar 1 (strain 1330)</name>
    <dbReference type="NCBI Taxonomy" id="204722"/>
    <lineage>
        <taxon>Bacteria</taxon>
        <taxon>Pseudomonadati</taxon>
        <taxon>Pseudomonadota</taxon>
        <taxon>Alphaproteobacteria</taxon>
        <taxon>Hyphomicrobiales</taxon>
        <taxon>Brucellaceae</taxon>
        <taxon>Brucella/Ochrobactrum group</taxon>
        <taxon>Brucella</taxon>
    </lineage>
</organism>
<evidence type="ECO:0000255" key="1">
    <source>
        <dbReference type="HAMAP-Rule" id="MF_00388"/>
    </source>
</evidence>
<name>LPXC_BRUSU</name>
<comment type="function">
    <text evidence="1">Catalyzes the hydrolysis of UDP-3-O-myristoyl-N-acetylglucosamine to form UDP-3-O-myristoylglucosamine and acetate, the committed step in lipid A biosynthesis.</text>
</comment>
<comment type="catalytic activity">
    <reaction evidence="1">
        <text>a UDP-3-O-[(3R)-3-hydroxyacyl]-N-acetyl-alpha-D-glucosamine + H2O = a UDP-3-O-[(3R)-3-hydroxyacyl]-alpha-D-glucosamine + acetate</text>
        <dbReference type="Rhea" id="RHEA:67816"/>
        <dbReference type="ChEBI" id="CHEBI:15377"/>
        <dbReference type="ChEBI" id="CHEBI:30089"/>
        <dbReference type="ChEBI" id="CHEBI:137740"/>
        <dbReference type="ChEBI" id="CHEBI:173225"/>
        <dbReference type="EC" id="3.5.1.108"/>
    </reaction>
</comment>
<comment type="cofactor">
    <cofactor evidence="1">
        <name>Zn(2+)</name>
        <dbReference type="ChEBI" id="CHEBI:29105"/>
    </cofactor>
</comment>
<comment type="pathway">
    <text evidence="1">Glycolipid biosynthesis; lipid IV(A) biosynthesis; lipid IV(A) from (3R)-3-hydroxytetradecanoyl-[acyl-carrier-protein] and UDP-N-acetyl-alpha-D-glucosamine: step 2/6.</text>
</comment>
<comment type="similarity">
    <text evidence="1">Belongs to the LpxC family.</text>
</comment>
<feature type="chain" id="PRO_0000191920" description="UDP-3-O-acyl-N-acetylglucosamine deacetylase">
    <location>
        <begin position="1"/>
        <end position="286"/>
    </location>
</feature>
<feature type="active site" description="Proton donor" evidence="1">
    <location>
        <position position="264"/>
    </location>
</feature>
<feature type="binding site" evidence="1">
    <location>
        <position position="79"/>
    </location>
    <ligand>
        <name>Zn(2+)</name>
        <dbReference type="ChEBI" id="CHEBI:29105"/>
    </ligand>
</feature>
<feature type="binding site" evidence="1">
    <location>
        <position position="237"/>
    </location>
    <ligand>
        <name>Zn(2+)</name>
        <dbReference type="ChEBI" id="CHEBI:29105"/>
    </ligand>
</feature>
<feature type="binding site" evidence="1">
    <location>
        <position position="241"/>
    </location>
    <ligand>
        <name>Zn(2+)</name>
        <dbReference type="ChEBI" id="CHEBI:29105"/>
    </ligand>
</feature>
<sequence>MNAYQKTIGRAVTLSGVGVHGGAPASARLLPADADTGILFQRSDIKDSAPVCAHVSQIGATDLCTSLGAREARIDTVEHLMAAISALGIDNLVVEIEGPEVPILDGTSARFIEAVDSVGVVTQDAKRRFIRILKTVRVEAGNSWGEFRPYDGTRFEVEIDFECPLIGRQKFAHDVDEETFRKELSTARTFGFMKDVERLWAAGLALGASLDNSLVIGDDNSIVNADGLRFKDEFVRHKTLDAVGDLALAGLPFIGCFSSYRGGHRLNSEAVKALLSDETAFEIIEA</sequence>
<accession>Q8FZP9</accession>
<accession>G0KBI4</accession>
<dbReference type="EC" id="3.5.1.108" evidence="1"/>
<dbReference type="EMBL" id="AE014291">
    <property type="protein sequence ID" value="AAN30337.1"/>
    <property type="molecule type" value="Genomic_DNA"/>
</dbReference>
<dbReference type="EMBL" id="CP002997">
    <property type="protein sequence ID" value="AEM18753.1"/>
    <property type="molecule type" value="Genomic_DNA"/>
</dbReference>
<dbReference type="RefSeq" id="WP_002964532.1">
    <property type="nucleotide sequence ID" value="NZ_KN046804.1"/>
</dbReference>
<dbReference type="SMR" id="Q8FZP9"/>
<dbReference type="GeneID" id="97533370"/>
<dbReference type="KEGG" id="bms:BR1424"/>
<dbReference type="KEGG" id="bsi:BS1330_I1418"/>
<dbReference type="PATRIC" id="fig|204722.21.peg.910"/>
<dbReference type="HOGENOM" id="CLU_046528_1_1_5"/>
<dbReference type="PhylomeDB" id="Q8FZP9"/>
<dbReference type="UniPathway" id="UPA00359">
    <property type="reaction ID" value="UER00478"/>
</dbReference>
<dbReference type="Proteomes" id="UP000007104">
    <property type="component" value="Chromosome I"/>
</dbReference>
<dbReference type="GO" id="GO:0016020">
    <property type="term" value="C:membrane"/>
    <property type="evidence" value="ECO:0007669"/>
    <property type="project" value="GOC"/>
</dbReference>
<dbReference type="GO" id="GO:0046872">
    <property type="term" value="F:metal ion binding"/>
    <property type="evidence" value="ECO:0007669"/>
    <property type="project" value="UniProtKB-KW"/>
</dbReference>
<dbReference type="GO" id="GO:0103117">
    <property type="term" value="F:UDP-3-O-acyl-N-acetylglucosamine deacetylase activity"/>
    <property type="evidence" value="ECO:0007669"/>
    <property type="project" value="UniProtKB-UniRule"/>
</dbReference>
<dbReference type="GO" id="GO:0009245">
    <property type="term" value="P:lipid A biosynthetic process"/>
    <property type="evidence" value="ECO:0007669"/>
    <property type="project" value="UniProtKB-UniRule"/>
</dbReference>
<dbReference type="Gene3D" id="3.30.230.20">
    <property type="entry name" value="lpxc deacetylase, domain 1"/>
    <property type="match status" value="1"/>
</dbReference>
<dbReference type="Gene3D" id="3.30.1700.10">
    <property type="entry name" value="lpxc deacetylase, domain 2"/>
    <property type="match status" value="1"/>
</dbReference>
<dbReference type="HAMAP" id="MF_00388">
    <property type="entry name" value="LpxC"/>
    <property type="match status" value="1"/>
</dbReference>
<dbReference type="InterPro" id="IPR020568">
    <property type="entry name" value="Ribosomal_Su5_D2-typ_SF"/>
</dbReference>
<dbReference type="InterPro" id="IPR004463">
    <property type="entry name" value="UDP-acyl_GlcNac_deAcase"/>
</dbReference>
<dbReference type="InterPro" id="IPR011334">
    <property type="entry name" value="UDP-acyl_GlcNac_deAcase_C"/>
</dbReference>
<dbReference type="InterPro" id="IPR015870">
    <property type="entry name" value="UDP-acyl_N-AcGlcN_deAcase_N"/>
</dbReference>
<dbReference type="NCBIfam" id="TIGR00325">
    <property type="entry name" value="lpxC"/>
    <property type="match status" value="1"/>
</dbReference>
<dbReference type="PANTHER" id="PTHR33694">
    <property type="entry name" value="UDP-3-O-ACYL-N-ACETYLGLUCOSAMINE DEACETYLASE 1, MITOCHONDRIAL-RELATED"/>
    <property type="match status" value="1"/>
</dbReference>
<dbReference type="PANTHER" id="PTHR33694:SF1">
    <property type="entry name" value="UDP-3-O-ACYL-N-ACETYLGLUCOSAMINE DEACETYLASE 1, MITOCHONDRIAL-RELATED"/>
    <property type="match status" value="1"/>
</dbReference>
<dbReference type="Pfam" id="PF03331">
    <property type="entry name" value="LpxC"/>
    <property type="match status" value="1"/>
</dbReference>
<dbReference type="SUPFAM" id="SSF54211">
    <property type="entry name" value="Ribosomal protein S5 domain 2-like"/>
    <property type="match status" value="2"/>
</dbReference>
<proteinExistence type="inferred from homology"/>
<protein>
    <recommendedName>
        <fullName evidence="1">UDP-3-O-acyl-N-acetylglucosamine deacetylase</fullName>
        <shortName evidence="1">UDP-3-O-acyl-GlcNAc deacetylase</shortName>
        <ecNumber evidence="1">3.5.1.108</ecNumber>
    </recommendedName>
    <alternativeName>
        <fullName evidence="1">UDP-3-O-[R-3-hydroxymyristoyl]-N-acetylglucosamine deacetylase</fullName>
    </alternativeName>
</protein>